<keyword id="KW-0002">3D-structure</keyword>
<keyword id="KW-0067">ATP-binding</keyword>
<keyword id="KW-0963">Cytoplasm</keyword>
<keyword id="KW-0256">Endoplasmic reticulum</keyword>
<keyword id="KW-0378">Hydrolase</keyword>
<keyword id="KW-0479">Metal-binding</keyword>
<keyword id="KW-0547">Nucleotide-binding</keyword>
<keyword id="KW-1185">Reference proteome</keyword>
<keyword id="KW-0813">Transport</keyword>
<keyword id="KW-0862">Zinc</keyword>
<protein>
    <recommendedName>
        <fullName evidence="1">ATPase get3</fullName>
        <ecNumber evidence="1">3.6.-.-</ecNumber>
    </recommendedName>
    <alternativeName>
        <fullName evidence="1">Arsenical pump-driving ATPase</fullName>
    </alternativeName>
    <alternativeName>
        <fullName evidence="1">Arsenite-stimulated ATPase</fullName>
    </alternativeName>
    <alternativeName>
        <fullName evidence="1">Golgi to ER traffic protein 3</fullName>
    </alternativeName>
    <alternativeName>
        <fullName evidence="1">Guided entry of tail-anchored proteins 3</fullName>
    </alternativeName>
</protein>
<dbReference type="EC" id="3.6.-.-" evidence="1"/>
<dbReference type="EMBL" id="AAHF01000002">
    <property type="protein sequence ID" value="EAL92446.2"/>
    <property type="molecule type" value="Genomic_DNA"/>
</dbReference>
<dbReference type="RefSeq" id="XP_754484.2">
    <property type="nucleotide sequence ID" value="XM_749391.2"/>
</dbReference>
<dbReference type="PDB" id="3IBG">
    <property type="method" value="X-ray"/>
    <property type="resolution" value="3.20 A"/>
    <property type="chains" value="A/B/C/D/E/F=3-340"/>
</dbReference>
<dbReference type="PDBsum" id="3IBG"/>
<dbReference type="SMR" id="Q4WY07"/>
<dbReference type="DIP" id="DIP-48950N"/>
<dbReference type="FunCoup" id="Q4WY07">
    <property type="interactions" value="980"/>
</dbReference>
<dbReference type="STRING" id="330879.Q4WY07"/>
<dbReference type="EnsemblFungi" id="EAL92446">
    <property type="protein sequence ID" value="EAL92446"/>
    <property type="gene ID" value="AFUA_3G11350"/>
</dbReference>
<dbReference type="GeneID" id="3512551"/>
<dbReference type="KEGG" id="afm:AFUA_3G11350"/>
<dbReference type="VEuPathDB" id="FungiDB:Afu3g11350"/>
<dbReference type="eggNOG" id="KOG2825">
    <property type="taxonomic scope" value="Eukaryota"/>
</dbReference>
<dbReference type="HOGENOM" id="CLU_040761_0_0_1"/>
<dbReference type="InParanoid" id="Q4WY07"/>
<dbReference type="OMA" id="MDAPYEF"/>
<dbReference type="OrthoDB" id="1770at2759"/>
<dbReference type="EvolutionaryTrace" id="Q4WY07"/>
<dbReference type="Proteomes" id="UP000002530">
    <property type="component" value="Chromosome 3"/>
</dbReference>
<dbReference type="GO" id="GO:0043529">
    <property type="term" value="C:GET complex"/>
    <property type="evidence" value="ECO:0000318"/>
    <property type="project" value="GO_Central"/>
</dbReference>
<dbReference type="GO" id="GO:0005524">
    <property type="term" value="F:ATP binding"/>
    <property type="evidence" value="ECO:0007669"/>
    <property type="project" value="UniProtKB-UniRule"/>
</dbReference>
<dbReference type="GO" id="GO:0016887">
    <property type="term" value="F:ATP hydrolysis activity"/>
    <property type="evidence" value="ECO:0000318"/>
    <property type="project" value="GO_Central"/>
</dbReference>
<dbReference type="GO" id="GO:0005085">
    <property type="term" value="F:guanyl-nucleotide exchange factor activity"/>
    <property type="evidence" value="ECO:0007669"/>
    <property type="project" value="EnsemblFungi"/>
</dbReference>
<dbReference type="GO" id="GO:0042802">
    <property type="term" value="F:identical protein binding"/>
    <property type="evidence" value="ECO:0000353"/>
    <property type="project" value="IntAct"/>
</dbReference>
<dbReference type="GO" id="GO:0046872">
    <property type="term" value="F:metal ion binding"/>
    <property type="evidence" value="ECO:0007669"/>
    <property type="project" value="UniProtKB-KW"/>
</dbReference>
<dbReference type="GO" id="GO:0044183">
    <property type="term" value="F:protein folding chaperone"/>
    <property type="evidence" value="ECO:0007669"/>
    <property type="project" value="EnsemblFungi"/>
</dbReference>
<dbReference type="GO" id="GO:0051082">
    <property type="term" value="F:unfolded protein binding"/>
    <property type="evidence" value="ECO:0007669"/>
    <property type="project" value="EnsemblFungi"/>
</dbReference>
<dbReference type="GO" id="GO:0034599">
    <property type="term" value="P:cellular response to oxidative stress"/>
    <property type="evidence" value="ECO:0007669"/>
    <property type="project" value="EnsemblFungi"/>
</dbReference>
<dbReference type="GO" id="GO:0000750">
    <property type="term" value="P:pheromone-dependent signal transduction involved in conjugation with cellular fusion"/>
    <property type="evidence" value="ECO:0007669"/>
    <property type="project" value="EnsemblFungi"/>
</dbReference>
<dbReference type="GO" id="GO:0006620">
    <property type="term" value="P:post-translational protein targeting to endoplasmic reticulum membrane"/>
    <property type="evidence" value="ECO:0007669"/>
    <property type="project" value="EnsemblFungi"/>
</dbReference>
<dbReference type="GO" id="GO:0009408">
    <property type="term" value="P:response to heat"/>
    <property type="evidence" value="ECO:0007669"/>
    <property type="project" value="EnsemblFungi"/>
</dbReference>
<dbReference type="GO" id="GO:0010038">
    <property type="term" value="P:response to metal ion"/>
    <property type="evidence" value="ECO:0007669"/>
    <property type="project" value="EnsemblFungi"/>
</dbReference>
<dbReference type="GO" id="GO:0006890">
    <property type="term" value="P:retrograde vesicle-mediated transport, Golgi to endoplasmic reticulum"/>
    <property type="evidence" value="ECO:0007669"/>
    <property type="project" value="EnsemblFungi"/>
</dbReference>
<dbReference type="GO" id="GO:0071816">
    <property type="term" value="P:tail-anchored membrane protein insertion into ER membrane"/>
    <property type="evidence" value="ECO:0000318"/>
    <property type="project" value="GO_Central"/>
</dbReference>
<dbReference type="CDD" id="cd02035">
    <property type="entry name" value="ArsA"/>
    <property type="match status" value="1"/>
</dbReference>
<dbReference type="FunFam" id="3.40.50.300:FF:000235">
    <property type="entry name" value="ATPase ASNA1"/>
    <property type="match status" value="1"/>
</dbReference>
<dbReference type="Gene3D" id="3.40.50.300">
    <property type="entry name" value="P-loop containing nucleotide triphosphate hydrolases"/>
    <property type="match status" value="1"/>
</dbReference>
<dbReference type="HAMAP" id="MF_03112">
    <property type="entry name" value="Asna1_Get3"/>
    <property type="match status" value="1"/>
</dbReference>
<dbReference type="InterPro" id="IPR025723">
    <property type="entry name" value="Anion-transp_ATPase-like_dom"/>
</dbReference>
<dbReference type="InterPro" id="IPR016300">
    <property type="entry name" value="ATPase_ArsA/GET3"/>
</dbReference>
<dbReference type="InterPro" id="IPR027542">
    <property type="entry name" value="ATPase_ArsA/GET3_euk"/>
</dbReference>
<dbReference type="InterPro" id="IPR027417">
    <property type="entry name" value="P-loop_NTPase"/>
</dbReference>
<dbReference type="NCBIfam" id="TIGR00345">
    <property type="entry name" value="GET3_arsA_TRC40"/>
    <property type="match status" value="1"/>
</dbReference>
<dbReference type="PANTHER" id="PTHR10803">
    <property type="entry name" value="ARSENICAL PUMP-DRIVING ATPASE ARSENITE-TRANSLOCATING ATPASE"/>
    <property type="match status" value="1"/>
</dbReference>
<dbReference type="PANTHER" id="PTHR10803:SF3">
    <property type="entry name" value="ATPASE GET3"/>
    <property type="match status" value="1"/>
</dbReference>
<dbReference type="Pfam" id="PF02374">
    <property type="entry name" value="ArsA_ATPase"/>
    <property type="match status" value="1"/>
</dbReference>
<dbReference type="SUPFAM" id="SSF52540">
    <property type="entry name" value="P-loop containing nucleoside triphosphate hydrolases"/>
    <property type="match status" value="1"/>
</dbReference>
<evidence type="ECO:0000255" key="1">
    <source>
        <dbReference type="HAMAP-Rule" id="MF_03112"/>
    </source>
</evidence>
<evidence type="ECO:0000269" key="2">
    <source>
    </source>
</evidence>
<evidence type="ECO:0007829" key="3">
    <source>
        <dbReference type="PDB" id="3IBG"/>
    </source>
</evidence>
<accession>Q4WY07</accession>
<proteinExistence type="evidence at protein level"/>
<gene>
    <name type="primary">get3</name>
    <name type="ORF">AFUA_3G11350</name>
</gene>
<comment type="function">
    <text evidence="1">ATPase required for the post-translational delivery of tail-anchored (TA) proteins to the endoplasmic reticulum. Recognizes and selectively binds the transmembrane domain of TA proteins in the cytosol. This complex then targets to the endoplasmic reticulum by membrane-bound receptors, where the tail-anchored protein is released for insertion. This process is regulated by ATP binding and hydrolysis. ATP binding drives the homodimer towards the closed dimer state, facilitating recognition of newly synthesized TA membrane proteins. ATP hydrolysis is required for insertion. Subsequently, the homodimer reverts towards the open dimer state, lowering its affinity for the membrane-bound receptor, and returning it to the cytosol to initiate a new round of targeting.</text>
</comment>
<comment type="subunit">
    <text evidence="1">Homodimer.</text>
</comment>
<comment type="interaction">
    <interactant intactId="EBI-15800715">
        <id>Q4WY07</id>
    </interactant>
    <interactant intactId="EBI-15800715">
        <id>Q4WY07</id>
        <label>get3</label>
    </interactant>
    <organismsDiffer>false</organismsDiffer>
    <experiments>2</experiments>
</comment>
<comment type="subcellular location">
    <subcellularLocation>
        <location evidence="1">Cytoplasm</location>
    </subcellularLocation>
    <subcellularLocation>
        <location evidence="1">Endoplasmic reticulum</location>
    </subcellularLocation>
</comment>
<comment type="similarity">
    <text evidence="1">Belongs to the arsA ATPase family.</text>
</comment>
<reference key="1">
    <citation type="journal article" date="2005" name="Nature">
        <title>Genomic sequence of the pathogenic and allergenic filamentous fungus Aspergillus fumigatus.</title>
        <authorList>
            <person name="Nierman W.C."/>
            <person name="Pain A."/>
            <person name="Anderson M.J."/>
            <person name="Wortman J.R."/>
            <person name="Kim H.S."/>
            <person name="Arroyo J."/>
            <person name="Berriman M."/>
            <person name="Abe K."/>
            <person name="Archer D.B."/>
            <person name="Bermejo C."/>
            <person name="Bennett J.W."/>
            <person name="Bowyer P."/>
            <person name="Chen D."/>
            <person name="Collins M."/>
            <person name="Coulsen R."/>
            <person name="Davies R."/>
            <person name="Dyer P.S."/>
            <person name="Farman M.L."/>
            <person name="Fedorova N."/>
            <person name="Fedorova N.D."/>
            <person name="Feldblyum T.V."/>
            <person name="Fischer R."/>
            <person name="Fosker N."/>
            <person name="Fraser A."/>
            <person name="Garcia J.L."/>
            <person name="Garcia M.J."/>
            <person name="Goble A."/>
            <person name="Goldman G.H."/>
            <person name="Gomi K."/>
            <person name="Griffith-Jones S."/>
            <person name="Gwilliam R."/>
            <person name="Haas B.J."/>
            <person name="Haas H."/>
            <person name="Harris D.E."/>
            <person name="Horiuchi H."/>
            <person name="Huang J."/>
            <person name="Humphray S."/>
            <person name="Jimenez J."/>
            <person name="Keller N."/>
            <person name="Khouri H."/>
            <person name="Kitamoto K."/>
            <person name="Kobayashi T."/>
            <person name="Konzack S."/>
            <person name="Kulkarni R."/>
            <person name="Kumagai T."/>
            <person name="Lafton A."/>
            <person name="Latge J.-P."/>
            <person name="Li W."/>
            <person name="Lord A."/>
            <person name="Lu C."/>
            <person name="Majoros W.H."/>
            <person name="May G.S."/>
            <person name="Miller B.L."/>
            <person name="Mohamoud Y."/>
            <person name="Molina M."/>
            <person name="Monod M."/>
            <person name="Mouyna I."/>
            <person name="Mulligan S."/>
            <person name="Murphy L.D."/>
            <person name="O'Neil S."/>
            <person name="Paulsen I."/>
            <person name="Penalva M.A."/>
            <person name="Pertea M."/>
            <person name="Price C."/>
            <person name="Pritchard B.L."/>
            <person name="Quail M.A."/>
            <person name="Rabbinowitsch E."/>
            <person name="Rawlins N."/>
            <person name="Rajandream M.A."/>
            <person name="Reichard U."/>
            <person name="Renauld H."/>
            <person name="Robson G.D."/>
            <person name="Rodriguez de Cordoba S."/>
            <person name="Rodriguez-Pena J.M."/>
            <person name="Ronning C.M."/>
            <person name="Rutter S."/>
            <person name="Salzberg S.L."/>
            <person name="Sanchez M."/>
            <person name="Sanchez-Ferrero J.C."/>
            <person name="Saunders D."/>
            <person name="Seeger K."/>
            <person name="Squares R."/>
            <person name="Squares S."/>
            <person name="Takeuchi M."/>
            <person name="Tekaia F."/>
            <person name="Turner G."/>
            <person name="Vazquez de Aldana C.R."/>
            <person name="Weidman J."/>
            <person name="White O."/>
            <person name="Woodward J.R."/>
            <person name="Yu J.-H."/>
            <person name="Fraser C.M."/>
            <person name="Galagan J.E."/>
            <person name="Asai K."/>
            <person name="Machida M."/>
            <person name="Hall N."/>
            <person name="Barrell B.G."/>
            <person name="Denning D.W."/>
        </authorList>
    </citation>
    <scope>NUCLEOTIDE SEQUENCE [LARGE SCALE GENOMIC DNA]</scope>
    <source>
        <strain>ATCC MYA-4609 / CBS 101355 / FGSC A1100 / Af293</strain>
    </source>
</reference>
<reference key="2">
    <citation type="journal article" date="2009" name="Proc. Natl. Acad. Sci. U.S.A.">
        <title>Model for eukaryotic tail-anchored protein binding based on the structure of Get3.</title>
        <authorList>
            <person name="Suloway C.J.M."/>
            <person name="Chartron J.W."/>
            <person name="Zaslaver M."/>
            <person name="Clemons W.M. Jr."/>
        </authorList>
    </citation>
    <scope>X-RAY CRYSTALLOGRAPHY (3.2 ANGSTROMS) IN COMPLEX WITH ADP</scope>
    <scope>SUBUNIT</scope>
    <scope>MUTAGENESIS OF GLY-38</scope>
</reference>
<organism>
    <name type="scientific">Aspergillus fumigatus (strain ATCC MYA-4609 / CBS 101355 / FGSC A1100 / Af293)</name>
    <name type="common">Neosartorya fumigata</name>
    <dbReference type="NCBI Taxonomy" id="330879"/>
    <lineage>
        <taxon>Eukaryota</taxon>
        <taxon>Fungi</taxon>
        <taxon>Dikarya</taxon>
        <taxon>Ascomycota</taxon>
        <taxon>Pezizomycotina</taxon>
        <taxon>Eurotiomycetes</taxon>
        <taxon>Eurotiomycetidae</taxon>
        <taxon>Eurotiales</taxon>
        <taxon>Aspergillaceae</taxon>
        <taxon>Aspergillus</taxon>
        <taxon>Aspergillus subgen. Fumigati</taxon>
    </lineage>
</organism>
<sequence>MSSTAVVHGDDLMEPTLQSILSQKTLRWIFVGGKGGVGKTTTSCSLAIQLAKVRKSVLLISTDPAHNLSDAFGQKFGKEARLVDGYSNLSAMEIDPNGSIQDLLASGDSQGDDPLAGLGMGNMMQDLAFSIPGVDEAMSFAEVLKQVKSLSYEVIVFDTAPTGHTLRFLQFPTVLEKALAKLSQLSSQFGPMLNSILGARGGLPGGQNIDELLQKMESLRETISEVNTQFKNPDMTTFVCVCIAEFLSLYETERMIQELTSYGIDTHAIVVNQLLFPKEGSGCEQCNARRKMQKKYLEQIEELYEDFNVVRMPLLVEEVRGKEKLEKFSEMLVHPYVPPQ</sequence>
<feature type="chain" id="PRO_0000388189" description="ATPase get3">
    <location>
        <begin position="1"/>
        <end position="340"/>
    </location>
</feature>
<feature type="active site" evidence="1">
    <location>
        <position position="63"/>
    </location>
</feature>
<feature type="binding site">
    <location>
        <begin position="34"/>
        <end position="41"/>
    </location>
    <ligand>
        <name>ATP</name>
        <dbReference type="ChEBI" id="CHEBI:30616"/>
    </ligand>
</feature>
<feature type="binding site" evidence="1">
    <location>
        <position position="245"/>
    </location>
    <ligand>
        <name>ATP</name>
        <dbReference type="ChEBI" id="CHEBI:30616"/>
    </ligand>
</feature>
<feature type="binding site">
    <location>
        <position position="272"/>
    </location>
    <ligand>
        <name>ATP</name>
        <dbReference type="ChEBI" id="CHEBI:30616"/>
    </ligand>
</feature>
<feature type="binding site" evidence="1">
    <location>
        <position position="283"/>
    </location>
    <ligand>
        <name>Zn(2+)</name>
        <dbReference type="ChEBI" id="CHEBI:29105"/>
        <note>ligand shared between dimeric partners</note>
    </ligand>
</feature>
<feature type="binding site" evidence="1">
    <location>
        <position position="286"/>
    </location>
    <ligand>
        <name>Zn(2+)</name>
        <dbReference type="ChEBI" id="CHEBI:29105"/>
        <note>ligand shared between dimeric partners</note>
    </ligand>
</feature>
<feature type="binding site">
    <location>
        <position position="320"/>
    </location>
    <ligand>
        <name>ATP</name>
        <dbReference type="ChEBI" id="CHEBI:30616"/>
    </ligand>
</feature>
<feature type="mutagenesis site" description="Abolishes ATPase activity." evidence="2">
    <original>G</original>
    <variation>R</variation>
    <location>
        <position position="38"/>
    </location>
</feature>
<feature type="helix" evidence="3">
    <location>
        <begin position="18"/>
        <end position="21"/>
    </location>
</feature>
<feature type="strand" evidence="3">
    <location>
        <begin position="28"/>
        <end position="32"/>
    </location>
</feature>
<feature type="strand" evidence="3">
    <location>
        <begin position="34"/>
        <end position="38"/>
    </location>
</feature>
<feature type="helix" evidence="3">
    <location>
        <begin position="39"/>
        <end position="51"/>
    </location>
</feature>
<feature type="strand" evidence="3">
    <location>
        <begin position="57"/>
        <end position="61"/>
    </location>
</feature>
<feature type="helix" evidence="3">
    <location>
        <begin position="67"/>
        <end position="72"/>
    </location>
</feature>
<feature type="strand" evidence="3">
    <location>
        <begin position="87"/>
        <end position="93"/>
    </location>
</feature>
<feature type="helix" evidence="3">
    <location>
        <begin position="100"/>
        <end position="104"/>
    </location>
</feature>
<feature type="helix" evidence="3">
    <location>
        <begin position="134"/>
        <end position="150"/>
    </location>
</feature>
<feature type="strand" evidence="3">
    <location>
        <begin position="153"/>
        <end position="158"/>
    </location>
</feature>
<feature type="turn" evidence="3">
    <location>
        <begin position="163"/>
        <end position="166"/>
    </location>
</feature>
<feature type="helix" evidence="3">
    <location>
        <begin position="167"/>
        <end position="170"/>
    </location>
</feature>
<feature type="helix" evidence="3">
    <location>
        <begin position="171"/>
        <end position="185"/>
    </location>
</feature>
<feature type="helix" evidence="3">
    <location>
        <begin position="198"/>
        <end position="201"/>
    </location>
</feature>
<feature type="helix" evidence="3">
    <location>
        <begin position="209"/>
        <end position="230"/>
    </location>
</feature>
<feature type="turn" evidence="3">
    <location>
        <begin position="233"/>
        <end position="235"/>
    </location>
</feature>
<feature type="strand" evidence="3">
    <location>
        <begin position="236"/>
        <end position="242"/>
    </location>
</feature>
<feature type="helix" evidence="3">
    <location>
        <begin position="246"/>
        <end position="261"/>
    </location>
</feature>
<feature type="strand" evidence="3">
    <location>
        <begin position="266"/>
        <end position="274"/>
    </location>
</feature>
<feature type="helix" evidence="3">
    <location>
        <begin position="284"/>
        <end position="303"/>
    </location>
</feature>
<feature type="turn" evidence="3">
    <location>
        <begin position="304"/>
        <end position="306"/>
    </location>
</feature>
<feature type="strand" evidence="3">
    <location>
        <begin position="307"/>
        <end position="313"/>
    </location>
</feature>
<feature type="helix" evidence="3">
    <location>
        <begin position="322"/>
        <end position="330"/>
    </location>
</feature>
<feature type="turn" evidence="3">
    <location>
        <begin position="331"/>
        <end position="333"/>
    </location>
</feature>
<name>GET3_ASPFU</name>